<protein>
    <recommendedName>
        <fullName>Phosphatase MT3486</fullName>
        <ecNumber>3.1.-.-</ecNumber>
    </recommendedName>
</protein>
<comment type="function">
    <text evidence="1">Able to hydrolyze geranyl diphosphate (GPP), farnesyl diphosphate (FPP) and geranylgeranyl diphosphate (GGPP) to respectively yield geraniol, farnesol and geranylgeraniol.</text>
</comment>
<comment type="similarity">
    <text evidence="2">Belongs to the HAD-like hydrolase superfamily.</text>
</comment>
<sequence>MSISAVVFDRDGVLTSFDWTRAEEDVRRITGLPLEEIERRWGGWLNGLTIDDAFVETQPISEFLSSLARELELGSKARDELVRLDYMAFAQGYPDARPALEEARRRGLKVGVLTNNSLLVSARSLLQCAALHDLVDVVLSSQMIGAAKPDPRAYQAIAEALGVSTTSCLFFDDIADWVEGARCAGMRAYLVDRSGQTRDGVVRDLSSLGAILDGAGP</sequence>
<keyword id="KW-0378">Hydrolase</keyword>
<keyword id="KW-1185">Reference proteome</keyword>
<organism>
    <name type="scientific">Mycobacterium tuberculosis (strain CDC 1551 / Oshkosh)</name>
    <dbReference type="NCBI Taxonomy" id="83331"/>
    <lineage>
        <taxon>Bacteria</taxon>
        <taxon>Bacillati</taxon>
        <taxon>Actinomycetota</taxon>
        <taxon>Actinomycetes</taxon>
        <taxon>Mycobacteriales</taxon>
        <taxon>Mycobacteriaceae</taxon>
        <taxon>Mycobacterium</taxon>
        <taxon>Mycobacterium tuberculosis complex</taxon>
    </lineage>
</organism>
<proteinExistence type="inferred from homology"/>
<name>Y3376_MYCTO</name>
<reference key="1">
    <citation type="journal article" date="2002" name="J. Bacteriol.">
        <title>Whole-genome comparison of Mycobacterium tuberculosis clinical and laboratory strains.</title>
        <authorList>
            <person name="Fleischmann R.D."/>
            <person name="Alland D."/>
            <person name="Eisen J.A."/>
            <person name="Carpenter L."/>
            <person name="White O."/>
            <person name="Peterson J.D."/>
            <person name="DeBoy R.T."/>
            <person name="Dodson R.J."/>
            <person name="Gwinn M.L."/>
            <person name="Haft D.H."/>
            <person name="Hickey E.K."/>
            <person name="Kolonay J.F."/>
            <person name="Nelson W.C."/>
            <person name="Umayam L.A."/>
            <person name="Ermolaeva M.D."/>
            <person name="Salzberg S.L."/>
            <person name="Delcher A."/>
            <person name="Utterback T.R."/>
            <person name="Weidman J.F."/>
            <person name="Khouri H.M."/>
            <person name="Gill J."/>
            <person name="Mikula A."/>
            <person name="Bishai W."/>
            <person name="Jacobs W.R. Jr."/>
            <person name="Venter J.C."/>
            <person name="Fraser C.M."/>
        </authorList>
    </citation>
    <scope>NUCLEOTIDE SEQUENCE [LARGE SCALE GENOMIC DNA]</scope>
    <source>
        <strain>CDC 1551 / Oshkosh</strain>
    </source>
</reference>
<gene>
    <name type="ordered locus">MT3486</name>
</gene>
<feature type="chain" id="PRO_0000427251" description="Phosphatase MT3486">
    <location>
        <begin position="1"/>
        <end position="217"/>
    </location>
</feature>
<feature type="active site" description="Nucleophile" evidence="1">
    <location>
        <position position="9"/>
    </location>
</feature>
<accession>P9WMS4</accession>
<accession>F2GEC2</accession>
<accession>L0TDY8</accession>
<accession>O50405</accession>
<accession>Q7D5L7</accession>
<dbReference type="EC" id="3.1.-.-"/>
<dbReference type="EMBL" id="AE000516">
    <property type="protein sequence ID" value="AAK47822.1"/>
    <property type="molecule type" value="Genomic_DNA"/>
</dbReference>
<dbReference type="PIR" id="G70972">
    <property type="entry name" value="G70972"/>
</dbReference>
<dbReference type="RefSeq" id="WP_003417903.1">
    <property type="nucleotide sequence ID" value="NZ_KK341227.1"/>
</dbReference>
<dbReference type="SMR" id="P9WMS4"/>
<dbReference type="KEGG" id="mtc:MT3486"/>
<dbReference type="PATRIC" id="fig|83331.31.peg.3743"/>
<dbReference type="HOGENOM" id="CLU_045011_9_3_11"/>
<dbReference type="Proteomes" id="UP000001020">
    <property type="component" value="Chromosome"/>
</dbReference>
<dbReference type="GO" id="GO:0016787">
    <property type="term" value="F:hydrolase activity"/>
    <property type="evidence" value="ECO:0007669"/>
    <property type="project" value="UniProtKB-KW"/>
</dbReference>
<dbReference type="CDD" id="cd02603">
    <property type="entry name" value="HAD_sEH-N_like"/>
    <property type="match status" value="1"/>
</dbReference>
<dbReference type="Gene3D" id="3.40.50.1000">
    <property type="entry name" value="HAD superfamily/HAD-like"/>
    <property type="match status" value="1"/>
</dbReference>
<dbReference type="InterPro" id="IPR036412">
    <property type="entry name" value="HAD-like_sf"/>
</dbReference>
<dbReference type="InterPro" id="IPR006439">
    <property type="entry name" value="HAD-SF_hydro_IA"/>
</dbReference>
<dbReference type="InterPro" id="IPR023214">
    <property type="entry name" value="HAD_sf"/>
</dbReference>
<dbReference type="InterPro" id="IPR051540">
    <property type="entry name" value="S-2-haloacid_dehalogenase"/>
</dbReference>
<dbReference type="NCBIfam" id="TIGR01549">
    <property type="entry name" value="HAD-SF-IA-v1"/>
    <property type="match status" value="1"/>
</dbReference>
<dbReference type="NCBIfam" id="TIGR01509">
    <property type="entry name" value="HAD-SF-IA-v3"/>
    <property type="match status" value="1"/>
</dbReference>
<dbReference type="PANTHER" id="PTHR43316:SF3">
    <property type="entry name" value="HALOACID DEHALOGENASE, TYPE II (AFU_ORTHOLOGUE AFUA_2G07750)-RELATED"/>
    <property type="match status" value="1"/>
</dbReference>
<dbReference type="PANTHER" id="PTHR43316">
    <property type="entry name" value="HYDROLASE, HALOACID DELAHOGENASE-RELATED"/>
    <property type="match status" value="1"/>
</dbReference>
<dbReference type="Pfam" id="PF00702">
    <property type="entry name" value="Hydrolase"/>
    <property type="match status" value="1"/>
</dbReference>
<dbReference type="PRINTS" id="PR00413">
    <property type="entry name" value="HADHALOGNASE"/>
</dbReference>
<dbReference type="SFLD" id="SFLDG01129">
    <property type="entry name" value="C1.5:_HAD__Beta-PGM__Phosphata"/>
    <property type="match status" value="1"/>
</dbReference>
<dbReference type="SFLD" id="SFLDS00003">
    <property type="entry name" value="Haloacid_Dehalogenase"/>
    <property type="match status" value="1"/>
</dbReference>
<dbReference type="SUPFAM" id="SSF56784">
    <property type="entry name" value="HAD-like"/>
    <property type="match status" value="1"/>
</dbReference>
<evidence type="ECO:0000250" key="1"/>
<evidence type="ECO:0000305" key="2"/>